<feature type="chain" id="PRO_0000165610" description="Holliday junction branch migration complex subunit RuvB">
    <location>
        <begin position="1"/>
        <end position="332"/>
    </location>
</feature>
<feature type="region of interest" description="Large ATPase domain (RuvB-L)" evidence="1">
    <location>
        <begin position="1"/>
        <end position="181"/>
    </location>
</feature>
<feature type="region of interest" description="Small ATPAse domain (RuvB-S)" evidence="1">
    <location>
        <begin position="182"/>
        <end position="252"/>
    </location>
</feature>
<feature type="region of interest" description="Head domain (RuvB-H)" evidence="1">
    <location>
        <begin position="255"/>
        <end position="332"/>
    </location>
</feature>
<feature type="binding site" evidence="1">
    <location>
        <position position="20"/>
    </location>
    <ligand>
        <name>ATP</name>
        <dbReference type="ChEBI" id="CHEBI:30616"/>
    </ligand>
</feature>
<feature type="binding site" evidence="1">
    <location>
        <position position="21"/>
    </location>
    <ligand>
        <name>ATP</name>
        <dbReference type="ChEBI" id="CHEBI:30616"/>
    </ligand>
</feature>
<feature type="binding site" evidence="1">
    <location>
        <position position="62"/>
    </location>
    <ligand>
        <name>ATP</name>
        <dbReference type="ChEBI" id="CHEBI:30616"/>
    </ligand>
</feature>
<feature type="binding site" evidence="1">
    <location>
        <position position="65"/>
    </location>
    <ligand>
        <name>ATP</name>
        <dbReference type="ChEBI" id="CHEBI:30616"/>
    </ligand>
</feature>
<feature type="binding site" evidence="1">
    <location>
        <position position="66"/>
    </location>
    <ligand>
        <name>ATP</name>
        <dbReference type="ChEBI" id="CHEBI:30616"/>
    </ligand>
</feature>
<feature type="binding site" evidence="1">
    <location>
        <position position="66"/>
    </location>
    <ligand>
        <name>Mg(2+)</name>
        <dbReference type="ChEBI" id="CHEBI:18420"/>
    </ligand>
</feature>
<feature type="binding site" evidence="1">
    <location>
        <position position="67"/>
    </location>
    <ligand>
        <name>ATP</name>
        <dbReference type="ChEBI" id="CHEBI:30616"/>
    </ligand>
</feature>
<feature type="binding site" evidence="1">
    <location>
        <begin position="128"/>
        <end position="130"/>
    </location>
    <ligand>
        <name>ATP</name>
        <dbReference type="ChEBI" id="CHEBI:30616"/>
    </ligand>
</feature>
<feature type="binding site" evidence="1">
    <location>
        <position position="171"/>
    </location>
    <ligand>
        <name>ATP</name>
        <dbReference type="ChEBI" id="CHEBI:30616"/>
    </ligand>
</feature>
<feature type="binding site" evidence="1">
    <location>
        <position position="181"/>
    </location>
    <ligand>
        <name>ATP</name>
        <dbReference type="ChEBI" id="CHEBI:30616"/>
    </ligand>
</feature>
<feature type="binding site" evidence="1">
    <location>
        <position position="218"/>
    </location>
    <ligand>
        <name>ATP</name>
        <dbReference type="ChEBI" id="CHEBI:30616"/>
    </ligand>
</feature>
<feature type="binding site" evidence="1">
    <location>
        <position position="291"/>
    </location>
    <ligand>
        <name>DNA</name>
        <dbReference type="ChEBI" id="CHEBI:16991"/>
    </ligand>
</feature>
<feature type="binding site" evidence="1">
    <location>
        <position position="310"/>
    </location>
    <ligand>
        <name>DNA</name>
        <dbReference type="ChEBI" id="CHEBI:16991"/>
    </ligand>
</feature>
<feature type="binding site" evidence="1">
    <location>
        <position position="312"/>
    </location>
    <ligand>
        <name>DNA</name>
        <dbReference type="ChEBI" id="CHEBI:16991"/>
    </ligand>
</feature>
<feature type="binding site" evidence="1">
    <location>
        <position position="315"/>
    </location>
    <ligand>
        <name>DNA</name>
        <dbReference type="ChEBI" id="CHEBI:16991"/>
    </ligand>
</feature>
<accession>P0DF50</accession>
<accession>Q8K8X8</accession>
<protein>
    <recommendedName>
        <fullName evidence="1">Holliday junction branch migration complex subunit RuvB</fullName>
        <ecNumber evidence="1">3.6.4.-</ecNumber>
    </recommendedName>
</protein>
<reference key="1">
    <citation type="journal article" date="2002" name="Proc. Natl. Acad. Sci. U.S.A.">
        <title>Genome sequence of a serotype M3 strain of group A Streptococcus: phage-encoded toxins, the high-virulence phenotype, and clone emergence.</title>
        <authorList>
            <person name="Beres S.B."/>
            <person name="Sylva G.L."/>
            <person name="Barbian K.D."/>
            <person name="Lei B."/>
            <person name="Hoff J.S."/>
            <person name="Mammarella N.D."/>
            <person name="Liu M.-Y."/>
            <person name="Smoot J.C."/>
            <person name="Porcella S.F."/>
            <person name="Parkins L.D."/>
            <person name="Campbell D.S."/>
            <person name="Smith T.M."/>
            <person name="McCormick J.K."/>
            <person name="Leung D.Y.M."/>
            <person name="Schlievert P.M."/>
            <person name="Musser J.M."/>
        </authorList>
    </citation>
    <scope>NUCLEOTIDE SEQUENCE [LARGE SCALE GENOMIC DNA]</scope>
    <source>
        <strain>ATCC BAA-595 / MGAS315</strain>
    </source>
</reference>
<keyword id="KW-0067">ATP-binding</keyword>
<keyword id="KW-0963">Cytoplasm</keyword>
<keyword id="KW-0227">DNA damage</keyword>
<keyword id="KW-0233">DNA recombination</keyword>
<keyword id="KW-0234">DNA repair</keyword>
<keyword id="KW-0238">DNA-binding</keyword>
<keyword id="KW-0378">Hydrolase</keyword>
<keyword id="KW-0547">Nucleotide-binding</keyword>
<comment type="function">
    <text evidence="1">The RuvA-RuvB-RuvC complex processes Holliday junction (HJ) DNA during genetic recombination and DNA repair, while the RuvA-RuvB complex plays an important role in the rescue of blocked DNA replication forks via replication fork reversal (RFR). RuvA specifically binds to HJ cruciform DNA, conferring on it an open structure. The RuvB hexamer acts as an ATP-dependent pump, pulling dsDNA into and through the RuvAB complex. RuvB forms 2 homohexamers on either side of HJ DNA bound by 1 or 2 RuvA tetramers; 4 subunits per hexamer contact DNA at a time. Coordinated motions by a converter formed by DNA-disengaged RuvB subunits stimulates ATP hydrolysis and nucleotide exchange. Immobilization of the converter enables RuvB to convert the ATP-contained energy into a lever motion, pulling 2 nucleotides of DNA out of the RuvA tetramer per ATP hydrolyzed, thus driving DNA branch migration. The RuvB motors rotate together with the DNA substrate, which together with the progressing nucleotide cycle form the mechanistic basis for DNA recombination by continuous HJ branch migration. Branch migration allows RuvC to scan DNA until it finds its consensus sequence, where it cleaves and resolves cruciform DNA.</text>
</comment>
<comment type="catalytic activity">
    <reaction evidence="1">
        <text>ATP + H2O = ADP + phosphate + H(+)</text>
        <dbReference type="Rhea" id="RHEA:13065"/>
        <dbReference type="ChEBI" id="CHEBI:15377"/>
        <dbReference type="ChEBI" id="CHEBI:15378"/>
        <dbReference type="ChEBI" id="CHEBI:30616"/>
        <dbReference type="ChEBI" id="CHEBI:43474"/>
        <dbReference type="ChEBI" id="CHEBI:456216"/>
    </reaction>
</comment>
<comment type="subunit">
    <text evidence="1">Homohexamer. Forms an RuvA(8)-RuvB(12)-Holliday junction (HJ) complex. HJ DNA is sandwiched between 2 RuvA tetramers; dsDNA enters through RuvA and exits via RuvB. An RuvB hexamer assembles on each DNA strand where it exits the tetramer. Each RuvB hexamer is contacted by two RuvA subunits (via domain III) on 2 adjacent RuvB subunits; this complex drives branch migration. In the full resolvosome a probable DNA-RuvA(4)-RuvB(12)-RuvC(2) complex forms which resolves the HJ.</text>
</comment>
<comment type="subcellular location">
    <subcellularLocation>
        <location evidence="1">Cytoplasm</location>
    </subcellularLocation>
</comment>
<comment type="domain">
    <text evidence="1">Has 3 domains, the large (RuvB-L) and small ATPase (RuvB-S) domains and the C-terminal head (RuvB-H) domain. The head domain binds DNA, while the ATPase domains jointly bind ATP, ADP or are empty depending on the state of the subunit in the translocation cycle. During a single DNA translocation step the structure of each domain remains the same, but their relative positions change.</text>
</comment>
<comment type="similarity">
    <text evidence="1">Belongs to the RuvB family.</text>
</comment>
<dbReference type="EC" id="3.6.4.-" evidence="1"/>
<dbReference type="EMBL" id="AE014074">
    <property type="protein sequence ID" value="AAM78639.1"/>
    <property type="molecule type" value="Genomic_DNA"/>
</dbReference>
<dbReference type="RefSeq" id="WP_011054100.1">
    <property type="nucleotide sequence ID" value="NC_004070.1"/>
</dbReference>
<dbReference type="SMR" id="P0DF50"/>
<dbReference type="KEGG" id="spg:SpyM3_0032"/>
<dbReference type="HOGENOM" id="CLU_055599_1_0_9"/>
<dbReference type="Proteomes" id="UP000000564">
    <property type="component" value="Chromosome"/>
</dbReference>
<dbReference type="GO" id="GO:0005737">
    <property type="term" value="C:cytoplasm"/>
    <property type="evidence" value="ECO:0007669"/>
    <property type="project" value="UniProtKB-SubCell"/>
</dbReference>
<dbReference type="GO" id="GO:0048476">
    <property type="term" value="C:Holliday junction resolvase complex"/>
    <property type="evidence" value="ECO:0007669"/>
    <property type="project" value="UniProtKB-UniRule"/>
</dbReference>
<dbReference type="GO" id="GO:0005524">
    <property type="term" value="F:ATP binding"/>
    <property type="evidence" value="ECO:0007669"/>
    <property type="project" value="UniProtKB-UniRule"/>
</dbReference>
<dbReference type="GO" id="GO:0016887">
    <property type="term" value="F:ATP hydrolysis activity"/>
    <property type="evidence" value="ECO:0007669"/>
    <property type="project" value="InterPro"/>
</dbReference>
<dbReference type="GO" id="GO:0000400">
    <property type="term" value="F:four-way junction DNA binding"/>
    <property type="evidence" value="ECO:0007669"/>
    <property type="project" value="UniProtKB-UniRule"/>
</dbReference>
<dbReference type="GO" id="GO:0009378">
    <property type="term" value="F:four-way junction helicase activity"/>
    <property type="evidence" value="ECO:0007669"/>
    <property type="project" value="InterPro"/>
</dbReference>
<dbReference type="GO" id="GO:0006310">
    <property type="term" value="P:DNA recombination"/>
    <property type="evidence" value="ECO:0007669"/>
    <property type="project" value="UniProtKB-UniRule"/>
</dbReference>
<dbReference type="GO" id="GO:0006281">
    <property type="term" value="P:DNA repair"/>
    <property type="evidence" value="ECO:0007669"/>
    <property type="project" value="UniProtKB-UniRule"/>
</dbReference>
<dbReference type="CDD" id="cd00009">
    <property type="entry name" value="AAA"/>
    <property type="match status" value="1"/>
</dbReference>
<dbReference type="Gene3D" id="1.10.8.60">
    <property type="match status" value="1"/>
</dbReference>
<dbReference type="Gene3D" id="3.40.50.300">
    <property type="entry name" value="P-loop containing nucleotide triphosphate hydrolases"/>
    <property type="match status" value="1"/>
</dbReference>
<dbReference type="Gene3D" id="1.10.10.10">
    <property type="entry name" value="Winged helix-like DNA-binding domain superfamily/Winged helix DNA-binding domain"/>
    <property type="match status" value="1"/>
</dbReference>
<dbReference type="HAMAP" id="MF_00016">
    <property type="entry name" value="DNA_HJ_migration_RuvB"/>
    <property type="match status" value="1"/>
</dbReference>
<dbReference type="InterPro" id="IPR003593">
    <property type="entry name" value="AAA+_ATPase"/>
</dbReference>
<dbReference type="InterPro" id="IPR041445">
    <property type="entry name" value="AAA_lid_4"/>
</dbReference>
<dbReference type="InterPro" id="IPR004605">
    <property type="entry name" value="DNA_helicase_Holl-junc_RuvB"/>
</dbReference>
<dbReference type="InterPro" id="IPR027417">
    <property type="entry name" value="P-loop_NTPase"/>
</dbReference>
<dbReference type="InterPro" id="IPR008824">
    <property type="entry name" value="RuvB-like_N"/>
</dbReference>
<dbReference type="InterPro" id="IPR008823">
    <property type="entry name" value="RuvB_C"/>
</dbReference>
<dbReference type="InterPro" id="IPR036388">
    <property type="entry name" value="WH-like_DNA-bd_sf"/>
</dbReference>
<dbReference type="InterPro" id="IPR036390">
    <property type="entry name" value="WH_DNA-bd_sf"/>
</dbReference>
<dbReference type="NCBIfam" id="NF000868">
    <property type="entry name" value="PRK00080.1"/>
    <property type="match status" value="1"/>
</dbReference>
<dbReference type="NCBIfam" id="TIGR00635">
    <property type="entry name" value="ruvB"/>
    <property type="match status" value="1"/>
</dbReference>
<dbReference type="PANTHER" id="PTHR42848">
    <property type="match status" value="1"/>
</dbReference>
<dbReference type="PANTHER" id="PTHR42848:SF1">
    <property type="entry name" value="HOLLIDAY JUNCTION BRANCH MIGRATION COMPLEX SUBUNIT RUVB"/>
    <property type="match status" value="1"/>
</dbReference>
<dbReference type="Pfam" id="PF17864">
    <property type="entry name" value="AAA_lid_4"/>
    <property type="match status" value="1"/>
</dbReference>
<dbReference type="Pfam" id="PF05491">
    <property type="entry name" value="RuvB_C"/>
    <property type="match status" value="1"/>
</dbReference>
<dbReference type="Pfam" id="PF05496">
    <property type="entry name" value="RuvB_N"/>
    <property type="match status" value="1"/>
</dbReference>
<dbReference type="SMART" id="SM00382">
    <property type="entry name" value="AAA"/>
    <property type="match status" value="1"/>
</dbReference>
<dbReference type="SUPFAM" id="SSF52540">
    <property type="entry name" value="P-loop containing nucleoside triphosphate hydrolases"/>
    <property type="match status" value="1"/>
</dbReference>
<dbReference type="SUPFAM" id="SSF46785">
    <property type="entry name" value="Winged helix' DNA-binding domain"/>
    <property type="match status" value="1"/>
</dbReference>
<organism>
    <name type="scientific">Streptococcus pyogenes serotype M3 (strain ATCC BAA-595 / MGAS315)</name>
    <dbReference type="NCBI Taxonomy" id="198466"/>
    <lineage>
        <taxon>Bacteria</taxon>
        <taxon>Bacillati</taxon>
        <taxon>Bacillota</taxon>
        <taxon>Bacilli</taxon>
        <taxon>Lactobacillales</taxon>
        <taxon>Streptococcaceae</taxon>
        <taxon>Streptococcus</taxon>
    </lineage>
</organism>
<evidence type="ECO:0000255" key="1">
    <source>
        <dbReference type="HAMAP-Rule" id="MF_00016"/>
    </source>
</evidence>
<name>RUVB_STRP3</name>
<gene>
    <name evidence="1" type="primary">ruvB</name>
    <name type="ordered locus">SpyM3_0032</name>
</gene>
<sequence>MARILDNDVMGNEEFSDRTLRPQYLHEYIGQDKVKEQFAIFIEAAKRRDESLDHVLLFGPPGLGKTTMAFVIANELGVNLKQTSGPAVEKAGDLVAILNELEPGDILFIDEIHRMPMSVEEVLYSAMEDFYIDIMIGAGDTSRSIHLDLPPFTLIGATTRAGMLSNPLRARFGITGHMEYYQEKDLTEIVERTATIFEIKIDHEAARKLACRSRGTPRIANRLLKRVRDYAQIIGDGIITAQITDRALTMLDVDREGLDYIDQKILRTMIEMYQGGPVGLGTLSVNIAEERNTVEEMYEPYLIQKGFLMRTRTGRVATQKAYRHLGYPYQNT</sequence>
<proteinExistence type="inferred from homology"/>